<proteinExistence type="predicted"/>
<name>YL93_SCHPO</name>
<reference key="1">
    <citation type="journal article" date="2002" name="Nature">
        <title>The genome sequence of Schizosaccharomyces pombe.</title>
        <authorList>
            <person name="Wood V."/>
            <person name="Gwilliam R."/>
            <person name="Rajandream M.A."/>
            <person name="Lyne M.H."/>
            <person name="Lyne R."/>
            <person name="Stewart A."/>
            <person name="Sgouros J.G."/>
            <person name="Peat N."/>
            <person name="Hayles J."/>
            <person name="Baker S.G."/>
            <person name="Basham D."/>
            <person name="Bowman S."/>
            <person name="Brooks K."/>
            <person name="Brown D."/>
            <person name="Brown S."/>
            <person name="Chillingworth T."/>
            <person name="Churcher C.M."/>
            <person name="Collins M."/>
            <person name="Connor R."/>
            <person name="Cronin A."/>
            <person name="Davis P."/>
            <person name="Feltwell T."/>
            <person name="Fraser A."/>
            <person name="Gentles S."/>
            <person name="Goble A."/>
            <person name="Hamlin N."/>
            <person name="Harris D.E."/>
            <person name="Hidalgo J."/>
            <person name="Hodgson G."/>
            <person name="Holroyd S."/>
            <person name="Hornsby T."/>
            <person name="Howarth S."/>
            <person name="Huckle E.J."/>
            <person name="Hunt S."/>
            <person name="Jagels K."/>
            <person name="James K.D."/>
            <person name="Jones L."/>
            <person name="Jones M."/>
            <person name="Leather S."/>
            <person name="McDonald S."/>
            <person name="McLean J."/>
            <person name="Mooney P."/>
            <person name="Moule S."/>
            <person name="Mungall K.L."/>
            <person name="Murphy L.D."/>
            <person name="Niblett D."/>
            <person name="Odell C."/>
            <person name="Oliver K."/>
            <person name="O'Neil S."/>
            <person name="Pearson D."/>
            <person name="Quail M.A."/>
            <person name="Rabbinowitsch E."/>
            <person name="Rutherford K.M."/>
            <person name="Rutter S."/>
            <person name="Saunders D."/>
            <person name="Seeger K."/>
            <person name="Sharp S."/>
            <person name="Skelton J."/>
            <person name="Simmonds M.N."/>
            <person name="Squares R."/>
            <person name="Squares S."/>
            <person name="Stevens K."/>
            <person name="Taylor K."/>
            <person name="Taylor R.G."/>
            <person name="Tivey A."/>
            <person name="Walsh S.V."/>
            <person name="Warren T."/>
            <person name="Whitehead S."/>
            <person name="Woodward J.R."/>
            <person name="Volckaert G."/>
            <person name="Aert R."/>
            <person name="Robben J."/>
            <person name="Grymonprez B."/>
            <person name="Weltjens I."/>
            <person name="Vanstreels E."/>
            <person name="Rieger M."/>
            <person name="Schaefer M."/>
            <person name="Mueller-Auer S."/>
            <person name="Gabel C."/>
            <person name="Fuchs M."/>
            <person name="Duesterhoeft A."/>
            <person name="Fritzc C."/>
            <person name="Holzer E."/>
            <person name="Moestl D."/>
            <person name="Hilbert H."/>
            <person name="Borzym K."/>
            <person name="Langer I."/>
            <person name="Beck A."/>
            <person name="Lehrach H."/>
            <person name="Reinhardt R."/>
            <person name="Pohl T.M."/>
            <person name="Eger P."/>
            <person name="Zimmermann W."/>
            <person name="Wedler H."/>
            <person name="Wambutt R."/>
            <person name="Purnelle B."/>
            <person name="Goffeau A."/>
            <person name="Cadieu E."/>
            <person name="Dreano S."/>
            <person name="Gloux S."/>
            <person name="Lelaure V."/>
            <person name="Mottier S."/>
            <person name="Galibert F."/>
            <person name="Aves S.J."/>
            <person name="Xiang Z."/>
            <person name="Hunt C."/>
            <person name="Moore K."/>
            <person name="Hurst S.M."/>
            <person name="Lucas M."/>
            <person name="Rochet M."/>
            <person name="Gaillardin C."/>
            <person name="Tallada V.A."/>
            <person name="Garzon A."/>
            <person name="Thode G."/>
            <person name="Daga R.R."/>
            <person name="Cruzado L."/>
            <person name="Jimenez J."/>
            <person name="Sanchez M."/>
            <person name="del Rey F."/>
            <person name="Benito J."/>
            <person name="Dominguez A."/>
            <person name="Revuelta J.L."/>
            <person name="Moreno S."/>
            <person name="Armstrong J."/>
            <person name="Forsburg S.L."/>
            <person name="Cerutti L."/>
            <person name="Lowe T."/>
            <person name="McCombie W.R."/>
            <person name="Paulsen I."/>
            <person name="Potashkin J."/>
            <person name="Shpakovski G.V."/>
            <person name="Ussery D."/>
            <person name="Barrell B.G."/>
            <person name="Nurse P."/>
        </authorList>
    </citation>
    <scope>NUCLEOTIDE SEQUENCE [LARGE SCALE GENOMIC DNA]</scope>
    <source>
        <strain>972 / ATCC 24843</strain>
    </source>
</reference>
<organism>
    <name type="scientific">Schizosaccharomyces pombe (strain 972 / ATCC 24843)</name>
    <name type="common">Fission yeast</name>
    <dbReference type="NCBI Taxonomy" id="284812"/>
    <lineage>
        <taxon>Eukaryota</taxon>
        <taxon>Fungi</taxon>
        <taxon>Dikarya</taxon>
        <taxon>Ascomycota</taxon>
        <taxon>Taphrinomycotina</taxon>
        <taxon>Schizosaccharomycetes</taxon>
        <taxon>Schizosaccharomycetales</taxon>
        <taxon>Schizosaccharomycetaceae</taxon>
        <taxon>Schizosaccharomyces</taxon>
    </lineage>
</organism>
<feature type="chain" id="PRO_0000116842" description="Uncharacterized protein C683.03">
    <location>
        <begin position="1"/>
        <end position="105"/>
    </location>
</feature>
<accession>Q96VG3</accession>
<keyword id="KW-1185">Reference proteome</keyword>
<protein>
    <recommendedName>
        <fullName>Uncharacterized protein C683.03</fullName>
    </recommendedName>
</protein>
<gene>
    <name type="ORF">SPAC683.03</name>
</gene>
<sequence>MEKCINRYKDILPLNRYSDGSGKCWGLLGCEISSVVGQTGVKRLLLGSITKFVYCSMRLFSLYTIVQYFKSLRCLRNGRTEVRLYTHYKRHLPRSVNSIYLQTNC</sequence>
<dbReference type="EMBL" id="CU329670">
    <property type="protein sequence ID" value="CAC41386.1"/>
    <property type="molecule type" value="Genomic_DNA"/>
</dbReference>
<dbReference type="RefSeq" id="NP_594480.1">
    <property type="nucleotide sequence ID" value="NM_001019909.2"/>
</dbReference>
<dbReference type="iPTMnet" id="Q96VG3"/>
<dbReference type="PaxDb" id="4896-SPAC683.03.1"/>
<dbReference type="EnsemblFungi" id="SPAC683.03.1">
    <property type="protein sequence ID" value="SPAC683.03.1:pep"/>
    <property type="gene ID" value="SPAC683.03"/>
</dbReference>
<dbReference type="KEGG" id="spo:2543487"/>
<dbReference type="PomBase" id="SPAC683.03"/>
<dbReference type="VEuPathDB" id="FungiDB:SPAC683.03"/>
<dbReference type="HOGENOM" id="CLU_2238179_0_0_1"/>
<dbReference type="InParanoid" id="Q96VG3"/>
<dbReference type="PRO" id="PR:Q96VG3"/>
<dbReference type="Proteomes" id="UP000002485">
    <property type="component" value="Chromosome I"/>
</dbReference>
<dbReference type="GO" id="GO:0005739">
    <property type="term" value="C:mitochondrion"/>
    <property type="evidence" value="ECO:0007005"/>
    <property type="project" value="PomBase"/>
</dbReference>